<evidence type="ECO:0000255" key="1">
    <source>
        <dbReference type="HAMAP-Rule" id="MF_00340"/>
    </source>
</evidence>
<evidence type="ECO:0000256" key="2">
    <source>
        <dbReference type="SAM" id="MobiDB-lite"/>
    </source>
</evidence>
<evidence type="ECO:0000305" key="3"/>
<gene>
    <name evidence="1" type="primary">rpmF</name>
    <name type="ordered locus">H16_A2571</name>
</gene>
<feature type="chain" id="PRO_0000296539" description="Large ribosomal subunit protein bL32">
    <location>
        <begin position="1"/>
        <end position="59"/>
    </location>
</feature>
<feature type="region of interest" description="Disordered" evidence="2">
    <location>
        <begin position="1"/>
        <end position="59"/>
    </location>
</feature>
<feature type="compositionally biased region" description="Basic residues" evidence="2">
    <location>
        <begin position="9"/>
        <end position="19"/>
    </location>
</feature>
<feature type="compositionally biased region" description="Basic residues" evidence="2">
    <location>
        <begin position="49"/>
        <end position="59"/>
    </location>
</feature>
<reference key="1">
    <citation type="journal article" date="2006" name="Nat. Biotechnol.">
        <title>Genome sequence of the bioplastic-producing 'Knallgas' bacterium Ralstonia eutropha H16.</title>
        <authorList>
            <person name="Pohlmann A."/>
            <person name="Fricke W.F."/>
            <person name="Reinecke F."/>
            <person name="Kusian B."/>
            <person name="Liesegang H."/>
            <person name="Cramm R."/>
            <person name="Eitinger T."/>
            <person name="Ewering C."/>
            <person name="Poetter M."/>
            <person name="Schwartz E."/>
            <person name="Strittmatter A."/>
            <person name="Voss I."/>
            <person name="Gottschalk G."/>
            <person name="Steinbuechel A."/>
            <person name="Friedrich B."/>
            <person name="Bowien B."/>
        </authorList>
    </citation>
    <scope>NUCLEOTIDE SEQUENCE [LARGE SCALE GENOMIC DNA]</scope>
    <source>
        <strain>ATCC 17699 / DSM 428 / KCTC 22496 / NCIMB 10442 / H16 / Stanier 337</strain>
    </source>
</reference>
<protein>
    <recommendedName>
        <fullName evidence="1">Large ribosomal subunit protein bL32</fullName>
    </recommendedName>
    <alternativeName>
        <fullName evidence="3">50S ribosomal protein L32</fullName>
    </alternativeName>
</protein>
<keyword id="KW-1185">Reference proteome</keyword>
<keyword id="KW-0687">Ribonucleoprotein</keyword>
<keyword id="KW-0689">Ribosomal protein</keyword>
<proteinExistence type="inferred from homology"/>
<accession>Q0K8L7</accession>
<name>RL32_CUPNH</name>
<dbReference type="EMBL" id="AM260479">
    <property type="protein sequence ID" value="CAJ93654.1"/>
    <property type="molecule type" value="Genomic_DNA"/>
</dbReference>
<dbReference type="RefSeq" id="WP_010814675.1">
    <property type="nucleotide sequence ID" value="NZ_CP039287.1"/>
</dbReference>
<dbReference type="SMR" id="Q0K8L7"/>
<dbReference type="STRING" id="381666.H16_A2571"/>
<dbReference type="GeneID" id="34308163"/>
<dbReference type="KEGG" id="reh:H16_A2571"/>
<dbReference type="eggNOG" id="COG0333">
    <property type="taxonomic scope" value="Bacteria"/>
</dbReference>
<dbReference type="HOGENOM" id="CLU_129084_2_1_4"/>
<dbReference type="OrthoDB" id="9801927at2"/>
<dbReference type="Proteomes" id="UP000008210">
    <property type="component" value="Chromosome 1"/>
</dbReference>
<dbReference type="GO" id="GO:0015934">
    <property type="term" value="C:large ribosomal subunit"/>
    <property type="evidence" value="ECO:0007669"/>
    <property type="project" value="InterPro"/>
</dbReference>
<dbReference type="GO" id="GO:0003735">
    <property type="term" value="F:structural constituent of ribosome"/>
    <property type="evidence" value="ECO:0007669"/>
    <property type="project" value="InterPro"/>
</dbReference>
<dbReference type="GO" id="GO:0006412">
    <property type="term" value="P:translation"/>
    <property type="evidence" value="ECO:0007669"/>
    <property type="project" value="UniProtKB-UniRule"/>
</dbReference>
<dbReference type="HAMAP" id="MF_00340">
    <property type="entry name" value="Ribosomal_bL32"/>
    <property type="match status" value="1"/>
</dbReference>
<dbReference type="InterPro" id="IPR002677">
    <property type="entry name" value="Ribosomal_bL32"/>
</dbReference>
<dbReference type="InterPro" id="IPR044957">
    <property type="entry name" value="Ribosomal_bL32_bact"/>
</dbReference>
<dbReference type="InterPro" id="IPR011332">
    <property type="entry name" value="Ribosomal_zn-bd"/>
</dbReference>
<dbReference type="NCBIfam" id="TIGR01031">
    <property type="entry name" value="rpmF_bact"/>
    <property type="match status" value="1"/>
</dbReference>
<dbReference type="PANTHER" id="PTHR35534">
    <property type="entry name" value="50S RIBOSOMAL PROTEIN L32"/>
    <property type="match status" value="1"/>
</dbReference>
<dbReference type="PANTHER" id="PTHR35534:SF1">
    <property type="entry name" value="LARGE RIBOSOMAL SUBUNIT PROTEIN BL32"/>
    <property type="match status" value="1"/>
</dbReference>
<dbReference type="Pfam" id="PF01783">
    <property type="entry name" value="Ribosomal_L32p"/>
    <property type="match status" value="1"/>
</dbReference>
<dbReference type="SUPFAM" id="SSF57829">
    <property type="entry name" value="Zn-binding ribosomal proteins"/>
    <property type="match status" value="1"/>
</dbReference>
<sequence length="59" mass="6657">MAVQQNKKSPSKRGMHRSHDHLSAAPLAVEPTTGETHLRHHVSPNGYYRGRKVIKTKND</sequence>
<comment type="similarity">
    <text evidence="1">Belongs to the bacterial ribosomal protein bL32 family.</text>
</comment>
<organism>
    <name type="scientific">Cupriavidus necator (strain ATCC 17699 / DSM 428 / KCTC 22496 / NCIMB 10442 / H16 / Stanier 337)</name>
    <name type="common">Ralstonia eutropha</name>
    <dbReference type="NCBI Taxonomy" id="381666"/>
    <lineage>
        <taxon>Bacteria</taxon>
        <taxon>Pseudomonadati</taxon>
        <taxon>Pseudomonadota</taxon>
        <taxon>Betaproteobacteria</taxon>
        <taxon>Burkholderiales</taxon>
        <taxon>Burkholderiaceae</taxon>
        <taxon>Cupriavidus</taxon>
    </lineage>
</organism>